<comment type="function">
    <text evidence="3">Protein N-lysine methyltransferase. Trimethylates KIN at Lys-135 (in vitro).</text>
</comment>
<comment type="catalytic activity">
    <reaction evidence="3">
        <text>L-lysyl-[protein] + 3 S-adenosyl-L-methionine = N(6),N(6),N(6)-trimethyl-L-lysyl-[protein] + 3 S-adenosyl-L-homocysteine + 3 H(+)</text>
        <dbReference type="Rhea" id="RHEA:54192"/>
        <dbReference type="Rhea" id="RHEA-COMP:9752"/>
        <dbReference type="Rhea" id="RHEA-COMP:13826"/>
        <dbReference type="ChEBI" id="CHEBI:15378"/>
        <dbReference type="ChEBI" id="CHEBI:29969"/>
        <dbReference type="ChEBI" id="CHEBI:57856"/>
        <dbReference type="ChEBI" id="CHEBI:59789"/>
        <dbReference type="ChEBI" id="CHEBI:61961"/>
    </reaction>
    <physiologicalReaction direction="left-to-right" evidence="8">
        <dbReference type="Rhea" id="RHEA:54193"/>
    </physiologicalReaction>
</comment>
<comment type="subunit">
    <text evidence="3">Interacts with members of the heat shock protein 90 and 70 families; these proteins probably are methylation substrates.</text>
</comment>
<comment type="interaction">
    <interactant intactId="EBI-2872640">
        <id>Q9BUU2</id>
    </interactant>
    <interactant intactId="EBI-2561225">
        <id>O60870</id>
        <label>KIN</label>
    </interactant>
    <organismsDiffer>false</organismsDiffer>
    <experiments>2</experiments>
</comment>
<comment type="subcellular location">
    <subcellularLocation>
        <location evidence="3">Nucleus</location>
    </subcellularLocation>
</comment>
<comment type="alternative products">
    <event type="alternative splicing"/>
    <isoform>
        <id>Q9BUU2-1</id>
        <name>1</name>
        <sequence type="displayed"/>
    </isoform>
    <isoform>
        <id>Q9BUU2-2</id>
        <name>2</name>
        <sequence type="described" ref="VSP_025107 VSP_025108"/>
    </isoform>
    <isoform>
        <id>Q9BUU2-3</id>
        <name>3</name>
        <sequence type="described" ref="VSP_025106"/>
    </isoform>
</comment>
<comment type="similarity">
    <text evidence="7">Belongs to the methyltransferase superfamily. METTL22 family.</text>
</comment>
<keyword id="KW-0025">Alternative splicing</keyword>
<keyword id="KW-0489">Methyltransferase</keyword>
<keyword id="KW-0539">Nucleus</keyword>
<keyword id="KW-0597">Phosphoprotein</keyword>
<keyword id="KW-1267">Proteomics identification</keyword>
<keyword id="KW-1185">Reference proteome</keyword>
<keyword id="KW-0949">S-adenosyl-L-methionine</keyword>
<keyword id="KW-0808">Transferase</keyword>
<protein>
    <recommendedName>
        <fullName>Methyltransferase-like protein 22</fullName>
        <ecNumber evidence="3">2.1.1.-</ecNumber>
    </recommendedName>
</protein>
<evidence type="ECO:0000256" key="1">
    <source>
        <dbReference type="SAM" id="MobiDB-lite"/>
    </source>
</evidence>
<evidence type="ECO:0000269" key="2">
    <source>
    </source>
</evidence>
<evidence type="ECO:0000269" key="3">
    <source>
    </source>
</evidence>
<evidence type="ECO:0000303" key="4">
    <source>
    </source>
</evidence>
<evidence type="ECO:0000303" key="5">
    <source>
    </source>
</evidence>
<evidence type="ECO:0000303" key="6">
    <source>
    </source>
</evidence>
<evidence type="ECO:0000305" key="7"/>
<evidence type="ECO:0000305" key="8">
    <source>
    </source>
</evidence>
<evidence type="ECO:0007744" key="9">
    <source>
    </source>
</evidence>
<evidence type="ECO:0007744" key="10">
    <source>
    </source>
</evidence>
<dbReference type="EC" id="2.1.1.-" evidence="3"/>
<dbReference type="EMBL" id="AK022495">
    <property type="protein sequence ID" value="BAB14058.1"/>
    <property type="molecule type" value="mRNA"/>
</dbReference>
<dbReference type="EMBL" id="AK315383">
    <property type="protein sequence ID" value="BAG37776.1"/>
    <property type="molecule type" value="mRNA"/>
</dbReference>
<dbReference type="EMBL" id="AC007224">
    <property type="status" value="NOT_ANNOTATED_CDS"/>
    <property type="molecule type" value="Genomic_DNA"/>
</dbReference>
<dbReference type="EMBL" id="AC138420">
    <property type="status" value="NOT_ANNOTATED_CDS"/>
    <property type="molecule type" value="Genomic_DNA"/>
</dbReference>
<dbReference type="EMBL" id="AY203956">
    <property type="protein sequence ID" value="AAP34479.1"/>
    <property type="molecule type" value="mRNA"/>
</dbReference>
<dbReference type="EMBL" id="CH471112">
    <property type="protein sequence ID" value="EAW85210.1"/>
    <property type="molecule type" value="Genomic_DNA"/>
</dbReference>
<dbReference type="EMBL" id="CH471112">
    <property type="protein sequence ID" value="EAW85211.1"/>
    <property type="molecule type" value="Genomic_DNA"/>
</dbReference>
<dbReference type="EMBL" id="BC001908">
    <property type="protein sequence ID" value="AAH01908.1"/>
    <property type="molecule type" value="mRNA"/>
</dbReference>
<dbReference type="CCDS" id="CCDS10533.2">
    <molecule id="Q9BUU2-1"/>
</dbReference>
<dbReference type="RefSeq" id="NP_077014.4">
    <molecule id="Q9BUU2-1"/>
    <property type="nucleotide sequence ID" value="NM_024109.4"/>
</dbReference>
<dbReference type="RefSeq" id="XP_047290568.1">
    <molecule id="Q9BUU2-1"/>
    <property type="nucleotide sequence ID" value="XM_047434612.1"/>
</dbReference>
<dbReference type="RefSeq" id="XP_047290569.1">
    <molecule id="Q9BUU2-1"/>
    <property type="nucleotide sequence ID" value="XM_047434613.1"/>
</dbReference>
<dbReference type="SMR" id="Q9BUU2"/>
<dbReference type="BioGRID" id="122539">
    <property type="interactions" value="26"/>
</dbReference>
<dbReference type="FunCoup" id="Q9BUU2">
    <property type="interactions" value="1029"/>
</dbReference>
<dbReference type="IntAct" id="Q9BUU2">
    <property type="interactions" value="4"/>
</dbReference>
<dbReference type="STRING" id="9606.ENSP00000371345"/>
<dbReference type="iPTMnet" id="Q9BUU2"/>
<dbReference type="PhosphoSitePlus" id="Q9BUU2"/>
<dbReference type="BioMuta" id="METTL22"/>
<dbReference type="DMDM" id="147639349"/>
<dbReference type="jPOST" id="Q9BUU2"/>
<dbReference type="MassIVE" id="Q9BUU2"/>
<dbReference type="PaxDb" id="9606-ENSP00000371345"/>
<dbReference type="PeptideAtlas" id="Q9BUU2"/>
<dbReference type="ProteomicsDB" id="79130">
    <molecule id="Q9BUU2-1"/>
</dbReference>
<dbReference type="ProteomicsDB" id="79131">
    <molecule id="Q9BUU2-2"/>
</dbReference>
<dbReference type="ProteomicsDB" id="79132">
    <molecule id="Q9BUU2-3"/>
</dbReference>
<dbReference type="Antibodypedia" id="51872">
    <property type="antibodies" value="28 antibodies from 11 providers"/>
</dbReference>
<dbReference type="DNASU" id="79091"/>
<dbReference type="Ensembl" id="ENST00000163678.11">
    <molecule id="Q9BUU2-2"/>
    <property type="protein sequence ID" value="ENSP00000163678.6"/>
    <property type="gene ID" value="ENSG00000067365.15"/>
</dbReference>
<dbReference type="Ensembl" id="ENST00000381920.8">
    <molecule id="Q9BUU2-1"/>
    <property type="protein sequence ID" value="ENSP00000371345.3"/>
    <property type="gene ID" value="ENSG00000067365.15"/>
</dbReference>
<dbReference type="GeneID" id="79091"/>
<dbReference type="KEGG" id="hsa:79091"/>
<dbReference type="MANE-Select" id="ENST00000381920.8">
    <property type="protein sequence ID" value="ENSP00000371345.3"/>
    <property type="RefSeq nucleotide sequence ID" value="NM_024109.4"/>
    <property type="RefSeq protein sequence ID" value="NP_077014.4"/>
</dbReference>
<dbReference type="UCSC" id="uc002czb.4">
    <molecule id="Q9BUU2-1"/>
    <property type="organism name" value="human"/>
</dbReference>
<dbReference type="AGR" id="HGNC:28368"/>
<dbReference type="CTD" id="79091"/>
<dbReference type="GeneCards" id="METTL22"/>
<dbReference type="HGNC" id="HGNC:28368">
    <property type="gene designation" value="METTL22"/>
</dbReference>
<dbReference type="HPA" id="ENSG00000067365">
    <property type="expression patterns" value="Low tissue specificity"/>
</dbReference>
<dbReference type="MIM" id="615261">
    <property type="type" value="gene"/>
</dbReference>
<dbReference type="neXtProt" id="NX_Q9BUU2"/>
<dbReference type="OpenTargets" id="ENSG00000067365"/>
<dbReference type="PharmGKB" id="PA144596479"/>
<dbReference type="VEuPathDB" id="HostDB:ENSG00000067365"/>
<dbReference type="eggNOG" id="KOG2497">
    <property type="taxonomic scope" value="Eukaryota"/>
</dbReference>
<dbReference type="GeneTree" id="ENSGT00510000048539"/>
<dbReference type="HOGENOM" id="CLU_097585_0_0_1"/>
<dbReference type="InParanoid" id="Q9BUU2"/>
<dbReference type="OMA" id="AYERIQQ"/>
<dbReference type="OrthoDB" id="46564at2759"/>
<dbReference type="PAN-GO" id="Q9BUU2">
    <property type="GO annotations" value="2 GO annotations based on evolutionary models"/>
</dbReference>
<dbReference type="PhylomeDB" id="Q9BUU2"/>
<dbReference type="TreeFam" id="TF324844"/>
<dbReference type="PathwayCommons" id="Q9BUU2"/>
<dbReference type="Reactome" id="R-HSA-8876725">
    <property type="pathway name" value="Protein methylation"/>
</dbReference>
<dbReference type="SignaLink" id="Q9BUU2"/>
<dbReference type="BioGRID-ORCS" id="79091">
    <property type="hits" value="7 hits in 1152 CRISPR screens"/>
</dbReference>
<dbReference type="ChiTaRS" id="METTL22">
    <property type="organism name" value="human"/>
</dbReference>
<dbReference type="GenomeRNAi" id="79091"/>
<dbReference type="Pharos" id="Q9BUU2">
    <property type="development level" value="Tdark"/>
</dbReference>
<dbReference type="PRO" id="PR:Q9BUU2"/>
<dbReference type="Proteomes" id="UP000005640">
    <property type="component" value="Chromosome 16"/>
</dbReference>
<dbReference type="RNAct" id="Q9BUU2">
    <property type="molecule type" value="protein"/>
</dbReference>
<dbReference type="Bgee" id="ENSG00000067365">
    <property type="expression patterns" value="Expressed in sperm and 160 other cell types or tissues"/>
</dbReference>
<dbReference type="ExpressionAtlas" id="Q9BUU2">
    <property type="expression patterns" value="baseline and differential"/>
</dbReference>
<dbReference type="GO" id="GO:0005730">
    <property type="term" value="C:nucleolus"/>
    <property type="evidence" value="ECO:0000314"/>
    <property type="project" value="HPA"/>
</dbReference>
<dbReference type="GO" id="GO:0005654">
    <property type="term" value="C:nucleoplasm"/>
    <property type="evidence" value="ECO:0000314"/>
    <property type="project" value="HPA"/>
</dbReference>
<dbReference type="GO" id="GO:0005634">
    <property type="term" value="C:nucleus"/>
    <property type="evidence" value="ECO:0000314"/>
    <property type="project" value="UniProtKB"/>
</dbReference>
<dbReference type="GO" id="GO:0032991">
    <property type="term" value="C:protein-containing complex"/>
    <property type="evidence" value="ECO:0000314"/>
    <property type="project" value="UniProtKB"/>
</dbReference>
<dbReference type="GO" id="GO:0031072">
    <property type="term" value="F:heat shock protein binding"/>
    <property type="evidence" value="ECO:0000353"/>
    <property type="project" value="UniProtKB"/>
</dbReference>
<dbReference type="GO" id="GO:0008276">
    <property type="term" value="F:protein methyltransferase activity"/>
    <property type="evidence" value="ECO:0000314"/>
    <property type="project" value="UniProtKB"/>
</dbReference>
<dbReference type="GO" id="GO:0016279">
    <property type="term" value="F:protein-lysine N-methyltransferase activity"/>
    <property type="evidence" value="ECO:0000304"/>
    <property type="project" value="Reactome"/>
</dbReference>
<dbReference type="GO" id="GO:0006479">
    <property type="term" value="P:protein methylation"/>
    <property type="evidence" value="ECO:0000314"/>
    <property type="project" value="UniProtKB"/>
</dbReference>
<dbReference type="FunFam" id="3.40.50.150:FF:000156">
    <property type="entry name" value="Methyltransferase like 22"/>
    <property type="match status" value="1"/>
</dbReference>
<dbReference type="Gene3D" id="3.40.50.150">
    <property type="entry name" value="Vaccinia Virus protein VP39"/>
    <property type="match status" value="1"/>
</dbReference>
<dbReference type="InterPro" id="IPR019410">
    <property type="entry name" value="Methyltransf_16"/>
</dbReference>
<dbReference type="InterPro" id="IPR038899">
    <property type="entry name" value="METTL22"/>
</dbReference>
<dbReference type="InterPro" id="IPR029063">
    <property type="entry name" value="SAM-dependent_MTases_sf"/>
</dbReference>
<dbReference type="PANTHER" id="PTHR23108:SF0">
    <property type="entry name" value="METHYLTRANSFERASE-LIKE PROTEIN 22"/>
    <property type="match status" value="1"/>
</dbReference>
<dbReference type="PANTHER" id="PTHR23108">
    <property type="entry name" value="METHYLTRANSFERASE-RELATED"/>
    <property type="match status" value="1"/>
</dbReference>
<dbReference type="Pfam" id="PF10294">
    <property type="entry name" value="Methyltransf_16"/>
    <property type="match status" value="1"/>
</dbReference>
<dbReference type="SUPFAM" id="SSF53335">
    <property type="entry name" value="S-adenosyl-L-methionine-dependent methyltransferases"/>
    <property type="match status" value="1"/>
</dbReference>
<gene>
    <name type="primary">METTL22</name>
    <name type="synonym">C16orf68</name>
    <name type="ORF">LP8272</name>
</gene>
<proteinExistence type="evidence at protein level"/>
<reference key="1">
    <citation type="journal article" date="2004" name="Nat. Genet.">
        <title>Complete sequencing and characterization of 21,243 full-length human cDNAs.</title>
        <authorList>
            <person name="Ota T."/>
            <person name="Suzuki Y."/>
            <person name="Nishikawa T."/>
            <person name="Otsuki T."/>
            <person name="Sugiyama T."/>
            <person name="Irie R."/>
            <person name="Wakamatsu A."/>
            <person name="Hayashi K."/>
            <person name="Sato H."/>
            <person name="Nagai K."/>
            <person name="Kimura K."/>
            <person name="Makita H."/>
            <person name="Sekine M."/>
            <person name="Obayashi M."/>
            <person name="Nishi T."/>
            <person name="Shibahara T."/>
            <person name="Tanaka T."/>
            <person name="Ishii S."/>
            <person name="Yamamoto J."/>
            <person name="Saito K."/>
            <person name="Kawai Y."/>
            <person name="Isono Y."/>
            <person name="Nakamura Y."/>
            <person name="Nagahari K."/>
            <person name="Murakami K."/>
            <person name="Yasuda T."/>
            <person name="Iwayanagi T."/>
            <person name="Wagatsuma M."/>
            <person name="Shiratori A."/>
            <person name="Sudo H."/>
            <person name="Hosoiri T."/>
            <person name="Kaku Y."/>
            <person name="Kodaira H."/>
            <person name="Kondo H."/>
            <person name="Sugawara M."/>
            <person name="Takahashi M."/>
            <person name="Kanda K."/>
            <person name="Yokoi T."/>
            <person name="Furuya T."/>
            <person name="Kikkawa E."/>
            <person name="Omura Y."/>
            <person name="Abe K."/>
            <person name="Kamihara K."/>
            <person name="Katsuta N."/>
            <person name="Sato K."/>
            <person name="Tanikawa M."/>
            <person name="Yamazaki M."/>
            <person name="Ninomiya K."/>
            <person name="Ishibashi T."/>
            <person name="Yamashita H."/>
            <person name="Murakawa K."/>
            <person name="Fujimori K."/>
            <person name="Tanai H."/>
            <person name="Kimata M."/>
            <person name="Watanabe M."/>
            <person name="Hiraoka S."/>
            <person name="Chiba Y."/>
            <person name="Ishida S."/>
            <person name="Ono Y."/>
            <person name="Takiguchi S."/>
            <person name="Watanabe S."/>
            <person name="Yosida M."/>
            <person name="Hotuta T."/>
            <person name="Kusano J."/>
            <person name="Kanehori K."/>
            <person name="Takahashi-Fujii A."/>
            <person name="Hara H."/>
            <person name="Tanase T.-O."/>
            <person name="Nomura Y."/>
            <person name="Togiya S."/>
            <person name="Komai F."/>
            <person name="Hara R."/>
            <person name="Takeuchi K."/>
            <person name="Arita M."/>
            <person name="Imose N."/>
            <person name="Musashino K."/>
            <person name="Yuuki H."/>
            <person name="Oshima A."/>
            <person name="Sasaki N."/>
            <person name="Aotsuka S."/>
            <person name="Yoshikawa Y."/>
            <person name="Matsunawa H."/>
            <person name="Ichihara T."/>
            <person name="Shiohata N."/>
            <person name="Sano S."/>
            <person name="Moriya S."/>
            <person name="Momiyama H."/>
            <person name="Satoh N."/>
            <person name="Takami S."/>
            <person name="Terashima Y."/>
            <person name="Suzuki O."/>
            <person name="Nakagawa S."/>
            <person name="Senoh A."/>
            <person name="Mizoguchi H."/>
            <person name="Goto Y."/>
            <person name="Shimizu F."/>
            <person name="Wakebe H."/>
            <person name="Hishigaki H."/>
            <person name="Watanabe T."/>
            <person name="Sugiyama A."/>
            <person name="Takemoto M."/>
            <person name="Kawakami B."/>
            <person name="Yamazaki M."/>
            <person name="Watanabe K."/>
            <person name="Kumagai A."/>
            <person name="Itakura S."/>
            <person name="Fukuzumi Y."/>
            <person name="Fujimori Y."/>
            <person name="Komiyama M."/>
            <person name="Tashiro H."/>
            <person name="Tanigami A."/>
            <person name="Fujiwara T."/>
            <person name="Ono T."/>
            <person name="Yamada K."/>
            <person name="Fujii Y."/>
            <person name="Ozaki K."/>
            <person name="Hirao M."/>
            <person name="Ohmori Y."/>
            <person name="Kawabata A."/>
            <person name="Hikiji T."/>
            <person name="Kobatake N."/>
            <person name="Inagaki H."/>
            <person name="Ikema Y."/>
            <person name="Okamoto S."/>
            <person name="Okitani R."/>
            <person name="Kawakami T."/>
            <person name="Noguchi S."/>
            <person name="Itoh T."/>
            <person name="Shigeta K."/>
            <person name="Senba T."/>
            <person name="Matsumura K."/>
            <person name="Nakajima Y."/>
            <person name="Mizuno T."/>
            <person name="Morinaga M."/>
            <person name="Sasaki M."/>
            <person name="Togashi T."/>
            <person name="Oyama M."/>
            <person name="Hata H."/>
            <person name="Watanabe M."/>
            <person name="Komatsu T."/>
            <person name="Mizushima-Sugano J."/>
            <person name="Satoh T."/>
            <person name="Shirai Y."/>
            <person name="Takahashi Y."/>
            <person name="Nakagawa K."/>
            <person name="Okumura K."/>
            <person name="Nagase T."/>
            <person name="Nomura N."/>
            <person name="Kikuchi H."/>
            <person name="Masuho Y."/>
            <person name="Yamashita R."/>
            <person name="Nakai K."/>
            <person name="Yada T."/>
            <person name="Nakamura Y."/>
            <person name="Ohara O."/>
            <person name="Isogai T."/>
            <person name="Sugano S."/>
        </authorList>
    </citation>
    <scope>NUCLEOTIDE SEQUENCE [LARGE SCALE MRNA] (ISOFORM 2)</scope>
    <source>
        <tissue>Brain</tissue>
    </source>
</reference>
<reference key="2">
    <citation type="journal article" date="2004" name="Nature">
        <title>The sequence and analysis of duplication-rich human chromosome 16.</title>
        <authorList>
            <person name="Martin J."/>
            <person name="Han C."/>
            <person name="Gordon L.A."/>
            <person name="Terry A."/>
            <person name="Prabhakar S."/>
            <person name="She X."/>
            <person name="Xie G."/>
            <person name="Hellsten U."/>
            <person name="Chan Y.M."/>
            <person name="Altherr M."/>
            <person name="Couronne O."/>
            <person name="Aerts A."/>
            <person name="Bajorek E."/>
            <person name="Black S."/>
            <person name="Blumer H."/>
            <person name="Branscomb E."/>
            <person name="Brown N.C."/>
            <person name="Bruno W.J."/>
            <person name="Buckingham J.M."/>
            <person name="Callen D.F."/>
            <person name="Campbell C.S."/>
            <person name="Campbell M.L."/>
            <person name="Campbell E.W."/>
            <person name="Caoile C."/>
            <person name="Challacombe J.F."/>
            <person name="Chasteen L.A."/>
            <person name="Chertkov O."/>
            <person name="Chi H.C."/>
            <person name="Christensen M."/>
            <person name="Clark L.M."/>
            <person name="Cohn J.D."/>
            <person name="Denys M."/>
            <person name="Detter J.C."/>
            <person name="Dickson M."/>
            <person name="Dimitrijevic-Bussod M."/>
            <person name="Escobar J."/>
            <person name="Fawcett J.J."/>
            <person name="Flowers D."/>
            <person name="Fotopulos D."/>
            <person name="Glavina T."/>
            <person name="Gomez M."/>
            <person name="Gonzales E."/>
            <person name="Goodstein D."/>
            <person name="Goodwin L.A."/>
            <person name="Grady D.L."/>
            <person name="Grigoriev I."/>
            <person name="Groza M."/>
            <person name="Hammon N."/>
            <person name="Hawkins T."/>
            <person name="Haydu L."/>
            <person name="Hildebrand C.E."/>
            <person name="Huang W."/>
            <person name="Israni S."/>
            <person name="Jett J."/>
            <person name="Jewett P.B."/>
            <person name="Kadner K."/>
            <person name="Kimball H."/>
            <person name="Kobayashi A."/>
            <person name="Krawczyk M.-C."/>
            <person name="Leyba T."/>
            <person name="Longmire J.L."/>
            <person name="Lopez F."/>
            <person name="Lou Y."/>
            <person name="Lowry S."/>
            <person name="Ludeman T."/>
            <person name="Manohar C.F."/>
            <person name="Mark G.A."/>
            <person name="McMurray K.L."/>
            <person name="Meincke L.J."/>
            <person name="Morgan J."/>
            <person name="Moyzis R.K."/>
            <person name="Mundt M.O."/>
            <person name="Munk A.C."/>
            <person name="Nandkeshwar R.D."/>
            <person name="Pitluck S."/>
            <person name="Pollard M."/>
            <person name="Predki P."/>
            <person name="Parson-Quintana B."/>
            <person name="Ramirez L."/>
            <person name="Rash S."/>
            <person name="Retterer J."/>
            <person name="Ricke D.O."/>
            <person name="Robinson D.L."/>
            <person name="Rodriguez A."/>
            <person name="Salamov A."/>
            <person name="Saunders E.H."/>
            <person name="Scott D."/>
            <person name="Shough T."/>
            <person name="Stallings R.L."/>
            <person name="Stalvey M."/>
            <person name="Sutherland R.D."/>
            <person name="Tapia R."/>
            <person name="Tesmer J.G."/>
            <person name="Thayer N."/>
            <person name="Thompson L.S."/>
            <person name="Tice H."/>
            <person name="Torney D.C."/>
            <person name="Tran-Gyamfi M."/>
            <person name="Tsai M."/>
            <person name="Ulanovsky L.E."/>
            <person name="Ustaszewska A."/>
            <person name="Vo N."/>
            <person name="White P.S."/>
            <person name="Williams A.L."/>
            <person name="Wills P.L."/>
            <person name="Wu J.-R."/>
            <person name="Wu K."/>
            <person name="Yang J."/>
            <person name="DeJong P."/>
            <person name="Bruce D."/>
            <person name="Doggett N.A."/>
            <person name="Deaven L."/>
            <person name="Schmutz J."/>
            <person name="Grimwood J."/>
            <person name="Richardson P."/>
            <person name="Rokhsar D.S."/>
            <person name="Eichler E.E."/>
            <person name="Gilna P."/>
            <person name="Lucas S.M."/>
            <person name="Myers R.M."/>
            <person name="Rubin E.M."/>
            <person name="Pennacchio L.A."/>
        </authorList>
    </citation>
    <scope>NUCLEOTIDE SEQUENCE [LARGE SCALE GENOMIC DNA]</scope>
</reference>
<reference key="3">
    <citation type="journal article" date="2004" name="Proc. Natl. Acad. Sci. U.S.A.">
        <title>Large-scale cDNA transfection screening for genes related to cancer development and progression.</title>
        <authorList>
            <person name="Wan D."/>
            <person name="Gong Y."/>
            <person name="Qin W."/>
            <person name="Zhang P."/>
            <person name="Li J."/>
            <person name="Wei L."/>
            <person name="Zhou X."/>
            <person name="Li H."/>
            <person name="Qiu X."/>
            <person name="Zhong F."/>
            <person name="He L."/>
            <person name="Yu J."/>
            <person name="Yao G."/>
            <person name="Jiang H."/>
            <person name="Qian L."/>
            <person name="Yu Y."/>
            <person name="Shu H."/>
            <person name="Chen X."/>
            <person name="Xu H."/>
            <person name="Guo M."/>
            <person name="Pan Z."/>
            <person name="Chen Y."/>
            <person name="Ge C."/>
            <person name="Yang S."/>
            <person name="Gu J."/>
        </authorList>
    </citation>
    <scope>NUCLEOTIDE SEQUENCE [LARGE SCALE MRNA] (ISOFORM 3)</scope>
    <scope>VARIANT THR-366</scope>
</reference>
<reference key="4">
    <citation type="submission" date="2005-09" db="EMBL/GenBank/DDBJ databases">
        <authorList>
            <person name="Mural R.J."/>
            <person name="Istrail S."/>
            <person name="Sutton G.G."/>
            <person name="Florea L."/>
            <person name="Halpern A.L."/>
            <person name="Mobarry C.M."/>
            <person name="Lippert R."/>
            <person name="Walenz B."/>
            <person name="Shatkay H."/>
            <person name="Dew I."/>
            <person name="Miller J.R."/>
            <person name="Flanigan M.J."/>
            <person name="Edwards N.J."/>
            <person name="Bolanos R."/>
            <person name="Fasulo D."/>
            <person name="Halldorsson B.V."/>
            <person name="Hannenhalli S."/>
            <person name="Turner R."/>
            <person name="Yooseph S."/>
            <person name="Lu F."/>
            <person name="Nusskern D.R."/>
            <person name="Shue B.C."/>
            <person name="Zheng X.H."/>
            <person name="Zhong F."/>
            <person name="Delcher A.L."/>
            <person name="Huson D.H."/>
            <person name="Kravitz S.A."/>
            <person name="Mouchard L."/>
            <person name="Reinert K."/>
            <person name="Remington K.A."/>
            <person name="Clark A.G."/>
            <person name="Waterman M.S."/>
            <person name="Eichler E.E."/>
            <person name="Adams M.D."/>
            <person name="Hunkapiller M.W."/>
            <person name="Myers E.W."/>
            <person name="Venter J.C."/>
        </authorList>
    </citation>
    <scope>NUCLEOTIDE SEQUENCE [LARGE SCALE GENOMIC DNA]</scope>
</reference>
<reference key="5">
    <citation type="journal article" date="2004" name="Genome Res.">
        <title>The status, quality, and expansion of the NIH full-length cDNA project: the Mammalian Gene Collection (MGC).</title>
        <authorList>
            <consortium name="The MGC Project Team"/>
        </authorList>
    </citation>
    <scope>NUCLEOTIDE SEQUENCE [LARGE SCALE MRNA] (ISOFORM 2)</scope>
    <source>
        <tissue>Lung</tissue>
    </source>
</reference>
<reference key="6">
    <citation type="journal article" date="2013" name="J. Proteome Res.">
        <title>Toward a comprehensive characterization of a human cancer cell phosphoproteome.</title>
        <authorList>
            <person name="Zhou H."/>
            <person name="Di Palma S."/>
            <person name="Preisinger C."/>
            <person name="Peng M."/>
            <person name="Polat A.N."/>
            <person name="Heck A.J."/>
            <person name="Mohammed S."/>
        </authorList>
    </citation>
    <scope>PHOSPHORYLATION [LARGE SCALE ANALYSIS] AT SER-132</scope>
    <scope>IDENTIFICATION BY MASS SPECTROMETRY [LARGE SCALE ANALYSIS]</scope>
    <source>
        <tissue>Cervix carcinoma</tissue>
    </source>
</reference>
<reference key="7">
    <citation type="journal article" date="2013" name="PLoS Genet.">
        <title>A newly uncovered group of distantly related lysine methyltransferases preferentially interact with molecular chaperones to regulate their activity.</title>
        <authorList>
            <person name="Cloutier P."/>
            <person name="Lavallee-Adam M."/>
            <person name="Faubert D."/>
            <person name="Blanchette M."/>
            <person name="Coulombe B."/>
        </authorList>
    </citation>
    <scope>FUNCTION</scope>
    <scope>CATALYTIC ACTIVITY</scope>
    <scope>INTERACTION WITH HSP70 AND HSP90 FAMILY MEMBERS</scope>
    <scope>SUBCELLULAR LOCATION</scope>
</reference>
<reference key="8">
    <citation type="journal article" date="2014" name="J. Proteomics">
        <title>An enzyme assisted RP-RPLC approach for in-depth analysis of human liver phosphoproteome.</title>
        <authorList>
            <person name="Bian Y."/>
            <person name="Song C."/>
            <person name="Cheng K."/>
            <person name="Dong M."/>
            <person name="Wang F."/>
            <person name="Huang J."/>
            <person name="Sun D."/>
            <person name="Wang L."/>
            <person name="Ye M."/>
            <person name="Zou H."/>
        </authorList>
    </citation>
    <scope>PHOSPHORYLATION [LARGE SCALE ANALYSIS] AT SER-132</scope>
    <scope>IDENTIFICATION BY MASS SPECTROMETRY [LARGE SCALE ANALYSIS]</scope>
    <source>
        <tissue>Liver</tissue>
    </source>
</reference>
<sequence length="404" mass="44486">MVQLAPAAAMDEVTFRSDTVLSDVHLYTPNHRHLMVRLNSVGQPVFLSQFKLLWSQDSWTDSGAKGGSHRDVHTKEPPSAETGSTGSPPGSGHGNEGFSLQAGTDTTGQEVAEAQLDEDGDLDVVRRPRAASDSNPAGPLRDKVHPMILAQEEDDVLGEEAQGSPHDIIRIEHTMATPLEDVGKQVWRGALLLADYILFRQDLFRGCTALELGAGTGLASIIAATMARTVYCTDVGADLLSMCQRNIALNSHLAATGGGIVRVKELDWLKDDLCTDPKVPFSWSQEEISDLYDHTTILFAAEVFYDDDLTDAVFKTLSRLAHRLKNACTAILSVEKRLNFTLRHLDVTCEAYDHFRSCLHALEQLADGKLRFVVEPVEASFPQLLVYERLQQLELWKIIAEPVT</sequence>
<name>MET22_HUMAN</name>
<organism>
    <name type="scientific">Homo sapiens</name>
    <name type="common">Human</name>
    <dbReference type="NCBI Taxonomy" id="9606"/>
    <lineage>
        <taxon>Eukaryota</taxon>
        <taxon>Metazoa</taxon>
        <taxon>Chordata</taxon>
        <taxon>Craniata</taxon>
        <taxon>Vertebrata</taxon>
        <taxon>Euteleostomi</taxon>
        <taxon>Mammalia</taxon>
        <taxon>Eutheria</taxon>
        <taxon>Euarchontoglires</taxon>
        <taxon>Primates</taxon>
        <taxon>Haplorrhini</taxon>
        <taxon>Catarrhini</taxon>
        <taxon>Hominidae</taxon>
        <taxon>Homo</taxon>
    </lineage>
</organism>
<feature type="chain" id="PRO_0000286591" description="Methyltransferase-like protein 22">
    <location>
        <begin position="1"/>
        <end position="404"/>
    </location>
</feature>
<feature type="region of interest" description="Disordered" evidence="1">
    <location>
        <begin position="60"/>
        <end position="102"/>
    </location>
</feature>
<feature type="region of interest" description="Disordered" evidence="1">
    <location>
        <begin position="115"/>
        <end position="145"/>
    </location>
</feature>
<feature type="compositionally biased region" description="Basic and acidic residues" evidence="1">
    <location>
        <begin position="68"/>
        <end position="78"/>
    </location>
</feature>
<feature type="compositionally biased region" description="Low complexity" evidence="1">
    <location>
        <begin position="79"/>
        <end position="88"/>
    </location>
</feature>
<feature type="modified residue" description="Phosphoserine" evidence="9 10">
    <location>
        <position position="132"/>
    </location>
</feature>
<feature type="splice variant" id="VSP_025106" description="In isoform 3." evidence="6">
    <location>
        <begin position="1"/>
        <end position="225"/>
    </location>
</feature>
<feature type="splice variant" id="VSP_025107" description="In isoform 2." evidence="4 5">
    <original>EHTMATPLEDVGKQVWRGALLLADYILFRQDLFR</original>
    <variation>GVAGRPAPGRLHPVPTGPLPRMYSAGARGRHGAR</variation>
    <location>
        <begin position="172"/>
        <end position="205"/>
    </location>
</feature>
<feature type="splice variant" id="VSP_025108" description="In isoform 2." evidence="4 5">
    <location>
        <begin position="206"/>
        <end position="404"/>
    </location>
</feature>
<feature type="sequence variant" id="VAR_032134" description="In dbSNP:rs2270286.">
    <original>W</original>
    <variation>S</variation>
    <location>
        <position position="59"/>
    </location>
</feature>
<feature type="sequence variant" id="VAR_032135" description="In dbSNP:rs2302607.">
    <original>A</original>
    <variation>T</variation>
    <location>
        <position position="219"/>
    </location>
</feature>
<feature type="sequence variant" id="VAR_059623" description="In dbSNP:rs1731000." evidence="2">
    <original>A</original>
    <variation>T</variation>
    <location>
        <position position="366"/>
    </location>
</feature>
<feature type="sequence variant" id="VAR_061617" description="In dbSNP:rs55747257.">
    <original>E</original>
    <variation>K</variation>
    <location>
        <position position="375"/>
    </location>
</feature>
<accession>Q9BUU2</accession>
<accession>B2RD29</accession>
<accession>D3DUF2</accession>
<accession>Q6XYB4</accession>
<accession>Q9HA03</accession>